<evidence type="ECO:0000255" key="1">
    <source>
        <dbReference type="HAMAP-Rule" id="MF_00251"/>
    </source>
</evidence>
<evidence type="ECO:0000305" key="2"/>
<accession>B9MBV8</accession>
<proteinExistence type="inferred from homology"/>
<dbReference type="EMBL" id="CP001392">
    <property type="protein sequence ID" value="ACM31878.1"/>
    <property type="molecule type" value="Genomic_DNA"/>
</dbReference>
<dbReference type="RefSeq" id="WP_003050535.1">
    <property type="nucleotide sequence ID" value="NC_011992.1"/>
</dbReference>
<dbReference type="SMR" id="B9MBV8"/>
<dbReference type="GeneID" id="94695184"/>
<dbReference type="KEGG" id="dia:Dtpsy_0394"/>
<dbReference type="eggNOG" id="COG0257">
    <property type="taxonomic scope" value="Bacteria"/>
</dbReference>
<dbReference type="HOGENOM" id="CLU_135723_6_2_4"/>
<dbReference type="Proteomes" id="UP000000450">
    <property type="component" value="Chromosome"/>
</dbReference>
<dbReference type="GO" id="GO:0005737">
    <property type="term" value="C:cytoplasm"/>
    <property type="evidence" value="ECO:0007669"/>
    <property type="project" value="UniProtKB-ARBA"/>
</dbReference>
<dbReference type="GO" id="GO:1990904">
    <property type="term" value="C:ribonucleoprotein complex"/>
    <property type="evidence" value="ECO:0007669"/>
    <property type="project" value="UniProtKB-KW"/>
</dbReference>
<dbReference type="GO" id="GO:0005840">
    <property type="term" value="C:ribosome"/>
    <property type="evidence" value="ECO:0007669"/>
    <property type="project" value="UniProtKB-KW"/>
</dbReference>
<dbReference type="GO" id="GO:0003735">
    <property type="term" value="F:structural constituent of ribosome"/>
    <property type="evidence" value="ECO:0007669"/>
    <property type="project" value="InterPro"/>
</dbReference>
<dbReference type="GO" id="GO:0006412">
    <property type="term" value="P:translation"/>
    <property type="evidence" value="ECO:0007669"/>
    <property type="project" value="UniProtKB-UniRule"/>
</dbReference>
<dbReference type="HAMAP" id="MF_00251">
    <property type="entry name" value="Ribosomal_bL36"/>
    <property type="match status" value="1"/>
</dbReference>
<dbReference type="InterPro" id="IPR000473">
    <property type="entry name" value="Ribosomal_bL36"/>
</dbReference>
<dbReference type="InterPro" id="IPR035977">
    <property type="entry name" value="Ribosomal_bL36_sp"/>
</dbReference>
<dbReference type="NCBIfam" id="TIGR01022">
    <property type="entry name" value="rpmJ_bact"/>
    <property type="match status" value="1"/>
</dbReference>
<dbReference type="PANTHER" id="PTHR42888">
    <property type="entry name" value="50S RIBOSOMAL PROTEIN L36, CHLOROPLASTIC"/>
    <property type="match status" value="1"/>
</dbReference>
<dbReference type="PANTHER" id="PTHR42888:SF1">
    <property type="entry name" value="LARGE RIBOSOMAL SUBUNIT PROTEIN BL36C"/>
    <property type="match status" value="1"/>
</dbReference>
<dbReference type="Pfam" id="PF00444">
    <property type="entry name" value="Ribosomal_L36"/>
    <property type="match status" value="1"/>
</dbReference>
<dbReference type="SUPFAM" id="SSF57840">
    <property type="entry name" value="Ribosomal protein L36"/>
    <property type="match status" value="1"/>
</dbReference>
<dbReference type="PROSITE" id="PS00828">
    <property type="entry name" value="RIBOSOMAL_L36"/>
    <property type="match status" value="1"/>
</dbReference>
<name>RL36_ACIET</name>
<feature type="chain" id="PRO_1000196188" description="Large ribosomal subunit protein bL36">
    <location>
        <begin position="1"/>
        <end position="37"/>
    </location>
</feature>
<comment type="similarity">
    <text evidence="1">Belongs to the bacterial ribosomal protein bL36 family.</text>
</comment>
<protein>
    <recommendedName>
        <fullName evidence="1">Large ribosomal subunit protein bL36</fullName>
    </recommendedName>
    <alternativeName>
        <fullName evidence="2">50S ribosomal protein L36</fullName>
    </alternativeName>
</protein>
<keyword id="KW-1185">Reference proteome</keyword>
<keyword id="KW-0687">Ribonucleoprotein</keyword>
<keyword id="KW-0689">Ribosomal protein</keyword>
<reference key="1">
    <citation type="submission" date="2009-01" db="EMBL/GenBank/DDBJ databases">
        <title>Complete sequence of Diaphorobacter sp. TPSY.</title>
        <authorList>
            <consortium name="US DOE Joint Genome Institute"/>
            <person name="Lucas S."/>
            <person name="Copeland A."/>
            <person name="Lapidus A."/>
            <person name="Glavina del Rio T."/>
            <person name="Tice H."/>
            <person name="Bruce D."/>
            <person name="Goodwin L."/>
            <person name="Pitluck S."/>
            <person name="Chertkov O."/>
            <person name="Brettin T."/>
            <person name="Detter J.C."/>
            <person name="Han C."/>
            <person name="Larimer F."/>
            <person name="Land M."/>
            <person name="Hauser L."/>
            <person name="Kyrpides N."/>
            <person name="Mikhailova N."/>
            <person name="Coates J.D."/>
        </authorList>
    </citation>
    <scope>NUCLEOTIDE SEQUENCE [LARGE SCALE GENOMIC DNA]</scope>
    <source>
        <strain>TPSY</strain>
    </source>
</reference>
<gene>
    <name evidence="1" type="primary">rpmJ</name>
    <name type="ordered locus">Dtpsy_0394</name>
</gene>
<sequence length="37" mass="4352">MRVSASVKKICRNCKIIRRKGVVRVICTDQRHKQRQG</sequence>
<organism>
    <name type="scientific">Acidovorax ebreus (strain TPSY)</name>
    <name type="common">Diaphorobacter sp. (strain TPSY)</name>
    <dbReference type="NCBI Taxonomy" id="535289"/>
    <lineage>
        <taxon>Bacteria</taxon>
        <taxon>Pseudomonadati</taxon>
        <taxon>Pseudomonadota</taxon>
        <taxon>Betaproteobacteria</taxon>
        <taxon>Burkholderiales</taxon>
        <taxon>Comamonadaceae</taxon>
        <taxon>Diaphorobacter</taxon>
    </lineage>
</organism>